<keyword id="KW-0963">Cytoplasm</keyword>
<keyword id="KW-0255">Endonuclease</keyword>
<keyword id="KW-0378">Hydrolase</keyword>
<keyword id="KW-0479">Metal-binding</keyword>
<keyword id="KW-0540">Nuclease</keyword>
<keyword id="KW-1185">Reference proteome</keyword>
<keyword id="KW-0690">Ribosome biogenesis</keyword>
<keyword id="KW-0698">rRNA processing</keyword>
<keyword id="KW-0862">Zinc</keyword>
<sequence>MFTIDFTDHTGEVNSEWYQQIDNLLTFAKKEEKIEDDAELSVTFVNKQEIQEINRDYRNKDKVTDVISFALEEDEPDIEGLDMPRVLGDIIICADVAKEQAEEYGHSFERELGFLALHGFLHLLGYDHMNEADEKEMFGRQKLILDNYGLTRD</sequence>
<gene>
    <name evidence="1" type="primary">ybeY</name>
    <name type="ordered locus">Sca_1192</name>
</gene>
<evidence type="ECO:0000255" key="1">
    <source>
        <dbReference type="HAMAP-Rule" id="MF_00009"/>
    </source>
</evidence>
<comment type="function">
    <text evidence="1">Single strand-specific metallo-endoribonuclease involved in late-stage 70S ribosome quality control and in maturation of the 3' terminus of the 16S rRNA.</text>
</comment>
<comment type="cofactor">
    <cofactor evidence="1">
        <name>Zn(2+)</name>
        <dbReference type="ChEBI" id="CHEBI:29105"/>
    </cofactor>
    <text evidence="1">Binds 1 zinc ion.</text>
</comment>
<comment type="subcellular location">
    <subcellularLocation>
        <location evidence="1">Cytoplasm</location>
    </subcellularLocation>
</comment>
<comment type="similarity">
    <text evidence="1">Belongs to the endoribonuclease YbeY family.</text>
</comment>
<reference key="1">
    <citation type="journal article" date="2009" name="Appl. Environ. Microbiol.">
        <title>Genome analysis of the meat starter culture bacterium Staphylococcus carnosus TM300.</title>
        <authorList>
            <person name="Rosenstein R."/>
            <person name="Nerz C."/>
            <person name="Biswas L."/>
            <person name="Resch A."/>
            <person name="Raddatz G."/>
            <person name="Schuster S.C."/>
            <person name="Goetz F."/>
        </authorList>
    </citation>
    <scope>NUCLEOTIDE SEQUENCE [LARGE SCALE GENOMIC DNA]</scope>
    <source>
        <strain>TM300</strain>
    </source>
</reference>
<feature type="chain" id="PRO_1000199995" description="Endoribonuclease YbeY">
    <location>
        <begin position="1"/>
        <end position="153"/>
    </location>
</feature>
<feature type="binding site" evidence="1">
    <location>
        <position position="118"/>
    </location>
    <ligand>
        <name>Zn(2+)</name>
        <dbReference type="ChEBI" id="CHEBI:29105"/>
        <note>catalytic</note>
    </ligand>
</feature>
<feature type="binding site" evidence="1">
    <location>
        <position position="122"/>
    </location>
    <ligand>
        <name>Zn(2+)</name>
        <dbReference type="ChEBI" id="CHEBI:29105"/>
        <note>catalytic</note>
    </ligand>
</feature>
<feature type="binding site" evidence="1">
    <location>
        <position position="128"/>
    </location>
    <ligand>
        <name>Zn(2+)</name>
        <dbReference type="ChEBI" id="CHEBI:29105"/>
        <note>catalytic</note>
    </ligand>
</feature>
<protein>
    <recommendedName>
        <fullName evidence="1">Endoribonuclease YbeY</fullName>
        <ecNumber evidence="1">3.1.-.-</ecNumber>
    </recommendedName>
</protein>
<proteinExistence type="inferred from homology"/>
<dbReference type="EC" id="3.1.-.-" evidence="1"/>
<dbReference type="EMBL" id="AM295250">
    <property type="protein sequence ID" value="CAL28099.1"/>
    <property type="molecule type" value="Genomic_DNA"/>
</dbReference>
<dbReference type="RefSeq" id="WP_015900440.1">
    <property type="nucleotide sequence ID" value="NC_012121.1"/>
</dbReference>
<dbReference type="SMR" id="B9DNL6"/>
<dbReference type="GeneID" id="93793617"/>
<dbReference type="KEGG" id="sca:SCA_1192"/>
<dbReference type="eggNOG" id="COG0319">
    <property type="taxonomic scope" value="Bacteria"/>
</dbReference>
<dbReference type="HOGENOM" id="CLU_106710_3_0_9"/>
<dbReference type="OrthoDB" id="9807740at2"/>
<dbReference type="BioCyc" id="SCAR396513:SCA_RS05970-MONOMER"/>
<dbReference type="Proteomes" id="UP000000444">
    <property type="component" value="Chromosome"/>
</dbReference>
<dbReference type="GO" id="GO:0005737">
    <property type="term" value="C:cytoplasm"/>
    <property type="evidence" value="ECO:0007669"/>
    <property type="project" value="UniProtKB-SubCell"/>
</dbReference>
<dbReference type="GO" id="GO:0004222">
    <property type="term" value="F:metalloendopeptidase activity"/>
    <property type="evidence" value="ECO:0007669"/>
    <property type="project" value="InterPro"/>
</dbReference>
<dbReference type="GO" id="GO:0004521">
    <property type="term" value="F:RNA endonuclease activity"/>
    <property type="evidence" value="ECO:0007669"/>
    <property type="project" value="UniProtKB-UniRule"/>
</dbReference>
<dbReference type="GO" id="GO:0008270">
    <property type="term" value="F:zinc ion binding"/>
    <property type="evidence" value="ECO:0007669"/>
    <property type="project" value="UniProtKB-UniRule"/>
</dbReference>
<dbReference type="GO" id="GO:0006364">
    <property type="term" value="P:rRNA processing"/>
    <property type="evidence" value="ECO:0007669"/>
    <property type="project" value="UniProtKB-UniRule"/>
</dbReference>
<dbReference type="Gene3D" id="3.40.390.30">
    <property type="entry name" value="Metalloproteases ('zincins'), catalytic domain"/>
    <property type="match status" value="1"/>
</dbReference>
<dbReference type="HAMAP" id="MF_00009">
    <property type="entry name" value="Endoribonucl_YbeY"/>
    <property type="match status" value="1"/>
</dbReference>
<dbReference type="InterPro" id="IPR023091">
    <property type="entry name" value="MetalPrtase_cat_dom_sf_prd"/>
</dbReference>
<dbReference type="InterPro" id="IPR002036">
    <property type="entry name" value="YbeY"/>
</dbReference>
<dbReference type="InterPro" id="IPR020549">
    <property type="entry name" value="YbeY_CS"/>
</dbReference>
<dbReference type="NCBIfam" id="TIGR00043">
    <property type="entry name" value="rRNA maturation RNase YbeY"/>
    <property type="match status" value="1"/>
</dbReference>
<dbReference type="PANTHER" id="PTHR46986">
    <property type="entry name" value="ENDORIBONUCLEASE YBEY, CHLOROPLASTIC"/>
    <property type="match status" value="1"/>
</dbReference>
<dbReference type="PANTHER" id="PTHR46986:SF1">
    <property type="entry name" value="ENDORIBONUCLEASE YBEY, CHLOROPLASTIC"/>
    <property type="match status" value="1"/>
</dbReference>
<dbReference type="Pfam" id="PF02130">
    <property type="entry name" value="YbeY"/>
    <property type="match status" value="1"/>
</dbReference>
<dbReference type="SUPFAM" id="SSF55486">
    <property type="entry name" value="Metalloproteases ('zincins'), catalytic domain"/>
    <property type="match status" value="1"/>
</dbReference>
<dbReference type="PROSITE" id="PS01306">
    <property type="entry name" value="UPF0054"/>
    <property type="match status" value="1"/>
</dbReference>
<accession>B9DNL6</accession>
<name>YBEY_STACT</name>
<organism>
    <name type="scientific">Staphylococcus carnosus (strain TM300)</name>
    <dbReference type="NCBI Taxonomy" id="396513"/>
    <lineage>
        <taxon>Bacteria</taxon>
        <taxon>Bacillati</taxon>
        <taxon>Bacillota</taxon>
        <taxon>Bacilli</taxon>
        <taxon>Bacillales</taxon>
        <taxon>Staphylococcaceae</taxon>
        <taxon>Staphylococcus</taxon>
    </lineage>
</organism>